<gene>
    <name type="ordered locus">SAUSA300_1974</name>
</gene>
<dbReference type="EMBL" id="CP000255">
    <property type="protein sequence ID" value="ABD21470.1"/>
    <property type="molecule type" value="Genomic_DNA"/>
</dbReference>
<dbReference type="SMR" id="Q2FFA3"/>
<dbReference type="ABCD" id="Q2FFA3">
    <property type="antibodies" value="1 sequenced antibody"/>
</dbReference>
<dbReference type="KEGG" id="saa:SAUSA300_1974"/>
<dbReference type="HOGENOM" id="CLU_055394_0_1_9"/>
<dbReference type="OMA" id="CKNITAC"/>
<dbReference type="Proteomes" id="UP000001939">
    <property type="component" value="Chromosome"/>
</dbReference>
<dbReference type="GO" id="GO:0005576">
    <property type="term" value="C:extracellular region"/>
    <property type="evidence" value="ECO:0007669"/>
    <property type="project" value="InterPro"/>
</dbReference>
<dbReference type="GO" id="GO:0051715">
    <property type="term" value="P:cytolysis in another organism"/>
    <property type="evidence" value="ECO:0007669"/>
    <property type="project" value="InterPro"/>
</dbReference>
<dbReference type="Gene3D" id="2.70.240.10">
    <property type="entry name" value="Leukocidin/porin MspA"/>
    <property type="match status" value="1"/>
</dbReference>
<dbReference type="InterPro" id="IPR003963">
    <property type="entry name" value="Bi-component_toxin_staph"/>
</dbReference>
<dbReference type="InterPro" id="IPR016183">
    <property type="entry name" value="Leukocidin/Hemolysin_toxin"/>
</dbReference>
<dbReference type="InterPro" id="IPR036435">
    <property type="entry name" value="Leukocidin/porin_MspA_sf"/>
</dbReference>
<dbReference type="NCBIfam" id="TIGR01002">
    <property type="entry name" value="hlyII"/>
    <property type="match status" value="1"/>
</dbReference>
<dbReference type="Pfam" id="PF07968">
    <property type="entry name" value="Leukocidin"/>
    <property type="match status" value="1"/>
</dbReference>
<dbReference type="PRINTS" id="PR01468">
    <property type="entry name" value="BICOMPNTOXIN"/>
</dbReference>
<dbReference type="SUPFAM" id="SSF56959">
    <property type="entry name" value="Leukocidin-like"/>
    <property type="match status" value="1"/>
</dbReference>
<evidence type="ECO:0000255" key="1"/>
<evidence type="ECO:0000305" key="2"/>
<comment type="similarity">
    <text evidence="2">Belongs to the aerolysin family.</text>
</comment>
<feature type="signal peptide" evidence="1">
    <location>
        <begin position="1"/>
        <end position="29"/>
    </location>
</feature>
<feature type="chain" id="PRO_0000298638" description="Uncharacterized leukocidin-like protein 1">
    <location>
        <begin position="30"/>
        <end position="338"/>
    </location>
</feature>
<proteinExistence type="inferred from homology"/>
<protein>
    <recommendedName>
        <fullName>Uncharacterized leukocidin-like protein 1</fullName>
    </recommendedName>
</protein>
<sequence>MIKQLCKNITICTLALSTTFTVLPATSFAKINSEIKQVSEKNLDGDTKMYTRTATTSDSQKNITQSLQFNFLTEPNYDKETVFIKAKGTIGSGLRILDPNGYWNSTLRWPGSYSVSIQNVDDNNNTNVTDFAPKNQDESREVKYTYGYKTGGDFSINRGGLTGNITKESNYSETISYQQPSYRTLLDQSTSHKGVGWKVEAHLINNMGHDHTRQLTNDSDNRTKSEIFSLTRNGNLWAKDNFTPKDKMPVTVSEGFNPEFLAVMSHDKKDKGKSQFVVHYKRSMDEFKIDWNRHGFWGYWSGENHVDKKEEKLSALYEVDWKTHNVKFVKVLNDNEKK</sequence>
<organism>
    <name type="scientific">Staphylococcus aureus (strain USA300)</name>
    <dbReference type="NCBI Taxonomy" id="367830"/>
    <lineage>
        <taxon>Bacteria</taxon>
        <taxon>Bacillati</taxon>
        <taxon>Bacillota</taxon>
        <taxon>Bacilli</taxon>
        <taxon>Bacillales</taxon>
        <taxon>Staphylococcaceae</taxon>
        <taxon>Staphylococcus</taxon>
    </lineage>
</organism>
<reference key="1">
    <citation type="journal article" date="2006" name="Lancet">
        <title>Complete genome sequence of USA300, an epidemic clone of community-acquired meticillin-resistant Staphylococcus aureus.</title>
        <authorList>
            <person name="Diep B.A."/>
            <person name="Gill S.R."/>
            <person name="Chang R.F."/>
            <person name="Phan T.H."/>
            <person name="Chen J.H."/>
            <person name="Davidson M.G."/>
            <person name="Lin F."/>
            <person name="Lin J."/>
            <person name="Carleton H.A."/>
            <person name="Mongodin E.F."/>
            <person name="Sensabaugh G.F."/>
            <person name="Perdreau-Remington F."/>
        </authorList>
    </citation>
    <scope>NUCLEOTIDE SEQUENCE [LARGE SCALE GENOMIC DNA]</scope>
    <source>
        <strain>USA300</strain>
    </source>
</reference>
<accession>Q2FFA3</accession>
<name>LUKL1_STAA3</name>
<keyword id="KW-0732">Signal</keyword>